<dbReference type="EC" id="1.17.7.4" evidence="1"/>
<dbReference type="EMBL" id="CP000903">
    <property type="protein sequence ID" value="ABY45302.1"/>
    <property type="molecule type" value="Genomic_DNA"/>
</dbReference>
<dbReference type="RefSeq" id="WP_002015175.1">
    <property type="nucleotide sequence ID" value="NC_010184.1"/>
</dbReference>
<dbReference type="SMR" id="A9VHR7"/>
<dbReference type="KEGG" id="bwe:BcerKBAB4_4140"/>
<dbReference type="eggNOG" id="COG0761">
    <property type="taxonomic scope" value="Bacteria"/>
</dbReference>
<dbReference type="HOGENOM" id="CLU_027486_0_0_9"/>
<dbReference type="UniPathway" id="UPA00056">
    <property type="reaction ID" value="UER00097"/>
</dbReference>
<dbReference type="UniPathway" id="UPA00059">
    <property type="reaction ID" value="UER00105"/>
</dbReference>
<dbReference type="Proteomes" id="UP000002154">
    <property type="component" value="Chromosome"/>
</dbReference>
<dbReference type="GO" id="GO:0051539">
    <property type="term" value="F:4 iron, 4 sulfur cluster binding"/>
    <property type="evidence" value="ECO:0007669"/>
    <property type="project" value="UniProtKB-UniRule"/>
</dbReference>
<dbReference type="GO" id="GO:0051745">
    <property type="term" value="F:4-hydroxy-3-methylbut-2-enyl diphosphate reductase activity"/>
    <property type="evidence" value="ECO:0007669"/>
    <property type="project" value="UniProtKB-UniRule"/>
</dbReference>
<dbReference type="GO" id="GO:0046872">
    <property type="term" value="F:metal ion binding"/>
    <property type="evidence" value="ECO:0007669"/>
    <property type="project" value="UniProtKB-KW"/>
</dbReference>
<dbReference type="GO" id="GO:0050992">
    <property type="term" value="P:dimethylallyl diphosphate biosynthetic process"/>
    <property type="evidence" value="ECO:0007669"/>
    <property type="project" value="UniProtKB-UniRule"/>
</dbReference>
<dbReference type="GO" id="GO:0019288">
    <property type="term" value="P:isopentenyl diphosphate biosynthetic process, methylerythritol 4-phosphate pathway"/>
    <property type="evidence" value="ECO:0007669"/>
    <property type="project" value="UniProtKB-UniRule"/>
</dbReference>
<dbReference type="GO" id="GO:0016114">
    <property type="term" value="P:terpenoid biosynthetic process"/>
    <property type="evidence" value="ECO:0007669"/>
    <property type="project" value="UniProtKB-UniRule"/>
</dbReference>
<dbReference type="CDD" id="cd13944">
    <property type="entry name" value="lytB_ispH"/>
    <property type="match status" value="1"/>
</dbReference>
<dbReference type="Gene3D" id="3.40.50.11270">
    <property type="match status" value="1"/>
</dbReference>
<dbReference type="Gene3D" id="3.40.1010.20">
    <property type="entry name" value="4-hydroxy-3-methylbut-2-enyl diphosphate reductase, catalytic domain"/>
    <property type="match status" value="2"/>
</dbReference>
<dbReference type="HAMAP" id="MF_00191">
    <property type="entry name" value="IspH"/>
    <property type="match status" value="1"/>
</dbReference>
<dbReference type="InterPro" id="IPR003451">
    <property type="entry name" value="LytB/IspH"/>
</dbReference>
<dbReference type="NCBIfam" id="TIGR00216">
    <property type="entry name" value="ispH_lytB"/>
    <property type="match status" value="1"/>
</dbReference>
<dbReference type="NCBIfam" id="NF002187">
    <property type="entry name" value="PRK01045.1-1"/>
    <property type="match status" value="1"/>
</dbReference>
<dbReference type="PANTHER" id="PTHR30426">
    <property type="entry name" value="4-HYDROXY-3-METHYLBUT-2-ENYL DIPHOSPHATE REDUCTASE"/>
    <property type="match status" value="1"/>
</dbReference>
<dbReference type="PANTHER" id="PTHR30426:SF0">
    <property type="entry name" value="4-HYDROXY-3-METHYLBUT-2-ENYL DIPHOSPHATE REDUCTASE"/>
    <property type="match status" value="1"/>
</dbReference>
<dbReference type="Pfam" id="PF02401">
    <property type="entry name" value="LYTB"/>
    <property type="match status" value="1"/>
</dbReference>
<comment type="function">
    <text evidence="1">Catalyzes the conversion of 1-hydroxy-2-methyl-2-(E)-butenyl 4-diphosphate (HMBPP) into a mixture of isopentenyl diphosphate (IPP) and dimethylallyl diphosphate (DMAPP). Acts in the terminal step of the DOXP/MEP pathway for isoprenoid precursor biosynthesis.</text>
</comment>
<comment type="catalytic activity">
    <reaction evidence="1">
        <text>isopentenyl diphosphate + 2 oxidized [2Fe-2S]-[ferredoxin] + H2O = (2E)-4-hydroxy-3-methylbut-2-enyl diphosphate + 2 reduced [2Fe-2S]-[ferredoxin] + 2 H(+)</text>
        <dbReference type="Rhea" id="RHEA:24488"/>
        <dbReference type="Rhea" id="RHEA-COMP:10000"/>
        <dbReference type="Rhea" id="RHEA-COMP:10001"/>
        <dbReference type="ChEBI" id="CHEBI:15377"/>
        <dbReference type="ChEBI" id="CHEBI:15378"/>
        <dbReference type="ChEBI" id="CHEBI:33737"/>
        <dbReference type="ChEBI" id="CHEBI:33738"/>
        <dbReference type="ChEBI" id="CHEBI:128753"/>
        <dbReference type="ChEBI" id="CHEBI:128769"/>
        <dbReference type="EC" id="1.17.7.4"/>
    </reaction>
</comment>
<comment type="catalytic activity">
    <reaction evidence="1">
        <text>dimethylallyl diphosphate + 2 oxidized [2Fe-2S]-[ferredoxin] + H2O = (2E)-4-hydroxy-3-methylbut-2-enyl diphosphate + 2 reduced [2Fe-2S]-[ferredoxin] + 2 H(+)</text>
        <dbReference type="Rhea" id="RHEA:24825"/>
        <dbReference type="Rhea" id="RHEA-COMP:10000"/>
        <dbReference type="Rhea" id="RHEA-COMP:10001"/>
        <dbReference type="ChEBI" id="CHEBI:15377"/>
        <dbReference type="ChEBI" id="CHEBI:15378"/>
        <dbReference type="ChEBI" id="CHEBI:33737"/>
        <dbReference type="ChEBI" id="CHEBI:33738"/>
        <dbReference type="ChEBI" id="CHEBI:57623"/>
        <dbReference type="ChEBI" id="CHEBI:128753"/>
        <dbReference type="EC" id="1.17.7.4"/>
    </reaction>
</comment>
<comment type="cofactor">
    <cofactor evidence="1">
        <name>[4Fe-4S] cluster</name>
        <dbReference type="ChEBI" id="CHEBI:49883"/>
    </cofactor>
    <text evidence="1">Binds 1 [4Fe-4S] cluster per subunit.</text>
</comment>
<comment type="pathway">
    <text evidence="1">Isoprenoid biosynthesis; dimethylallyl diphosphate biosynthesis; dimethylallyl diphosphate from (2E)-4-hydroxy-3-methylbutenyl diphosphate: step 1/1.</text>
</comment>
<comment type="pathway">
    <text evidence="1">Isoprenoid biosynthesis; isopentenyl diphosphate biosynthesis via DXP pathway; isopentenyl diphosphate from 1-deoxy-D-xylulose 5-phosphate: step 6/6.</text>
</comment>
<comment type="similarity">
    <text evidence="1">Belongs to the IspH family.</text>
</comment>
<accession>A9VHR7</accession>
<keyword id="KW-0004">4Fe-4S</keyword>
<keyword id="KW-0408">Iron</keyword>
<keyword id="KW-0411">Iron-sulfur</keyword>
<keyword id="KW-0414">Isoprene biosynthesis</keyword>
<keyword id="KW-0479">Metal-binding</keyword>
<keyword id="KW-0560">Oxidoreductase</keyword>
<proteinExistence type="inferred from homology"/>
<sequence length="316" mass="34939">MKIVKISPRGYCYGVVDAMVIARNAALDKSLPRPIYILGMIVHNKHVTDAFEEDGIITLDGPSRLEILDKIDSGTVIFTAHGVSPEVKQRAKEKGLTTIDATCPDVTKTHDLIEAKKAEGYHVIYIGKKNHPEPEGAVGIAPDIVHLIEKADDLKTLEIPTDKILVTNQTTMSQWDVQHLMEDIQKKFPTAEFHKEICLATQVRQEAVAKQADVADLTIVVGDPKSNNSNRLAQVSQEIAGTTAYRVADVSEIQLEWLQGVENVAVTAGASTPTPITKEVIAFLDQYDPMNPATWDRIRKVPLQKILPRVKVKKEQ</sequence>
<organism>
    <name type="scientific">Bacillus mycoides (strain KBAB4)</name>
    <name type="common">Bacillus weihenstephanensis</name>
    <dbReference type="NCBI Taxonomy" id="315730"/>
    <lineage>
        <taxon>Bacteria</taxon>
        <taxon>Bacillati</taxon>
        <taxon>Bacillota</taxon>
        <taxon>Bacilli</taxon>
        <taxon>Bacillales</taxon>
        <taxon>Bacillaceae</taxon>
        <taxon>Bacillus</taxon>
        <taxon>Bacillus cereus group</taxon>
    </lineage>
</organism>
<evidence type="ECO:0000255" key="1">
    <source>
        <dbReference type="HAMAP-Rule" id="MF_00191"/>
    </source>
</evidence>
<name>ISPH_BACMK</name>
<protein>
    <recommendedName>
        <fullName evidence="1">4-hydroxy-3-methylbut-2-enyl diphosphate reductase</fullName>
        <shortName evidence="1">HMBPP reductase</shortName>
        <ecNumber evidence="1">1.17.7.4</ecNumber>
    </recommendedName>
</protein>
<gene>
    <name evidence="1" type="primary">ispH</name>
    <name type="ordered locus">BcerKBAB4_4140</name>
</gene>
<feature type="chain" id="PRO_1000098933" description="4-hydroxy-3-methylbut-2-enyl diphosphate reductase">
    <location>
        <begin position="1"/>
        <end position="316"/>
    </location>
</feature>
<feature type="active site" description="Proton donor" evidence="1">
    <location>
        <position position="133"/>
    </location>
</feature>
<feature type="binding site" evidence="1">
    <location>
        <position position="12"/>
    </location>
    <ligand>
        <name>[4Fe-4S] cluster</name>
        <dbReference type="ChEBI" id="CHEBI:49883"/>
    </ligand>
</feature>
<feature type="binding site" evidence="1">
    <location>
        <position position="43"/>
    </location>
    <ligand>
        <name>(2E)-4-hydroxy-3-methylbut-2-enyl diphosphate</name>
        <dbReference type="ChEBI" id="CHEBI:128753"/>
    </ligand>
</feature>
<feature type="binding site" evidence="1">
    <location>
        <position position="43"/>
    </location>
    <ligand>
        <name>dimethylallyl diphosphate</name>
        <dbReference type="ChEBI" id="CHEBI:57623"/>
    </ligand>
</feature>
<feature type="binding site" evidence="1">
    <location>
        <position position="43"/>
    </location>
    <ligand>
        <name>isopentenyl diphosphate</name>
        <dbReference type="ChEBI" id="CHEBI:128769"/>
    </ligand>
</feature>
<feature type="binding site" evidence="1">
    <location>
        <position position="81"/>
    </location>
    <ligand>
        <name>(2E)-4-hydroxy-3-methylbut-2-enyl diphosphate</name>
        <dbReference type="ChEBI" id="CHEBI:128753"/>
    </ligand>
</feature>
<feature type="binding site" evidence="1">
    <location>
        <position position="81"/>
    </location>
    <ligand>
        <name>dimethylallyl diphosphate</name>
        <dbReference type="ChEBI" id="CHEBI:57623"/>
    </ligand>
</feature>
<feature type="binding site" evidence="1">
    <location>
        <position position="81"/>
    </location>
    <ligand>
        <name>isopentenyl diphosphate</name>
        <dbReference type="ChEBI" id="CHEBI:128769"/>
    </ligand>
</feature>
<feature type="binding site" evidence="1">
    <location>
        <position position="103"/>
    </location>
    <ligand>
        <name>[4Fe-4S] cluster</name>
        <dbReference type="ChEBI" id="CHEBI:49883"/>
    </ligand>
</feature>
<feature type="binding site" evidence="1">
    <location>
        <position position="131"/>
    </location>
    <ligand>
        <name>(2E)-4-hydroxy-3-methylbut-2-enyl diphosphate</name>
        <dbReference type="ChEBI" id="CHEBI:128753"/>
    </ligand>
</feature>
<feature type="binding site" evidence="1">
    <location>
        <position position="131"/>
    </location>
    <ligand>
        <name>dimethylallyl diphosphate</name>
        <dbReference type="ChEBI" id="CHEBI:57623"/>
    </ligand>
</feature>
<feature type="binding site" evidence="1">
    <location>
        <position position="131"/>
    </location>
    <ligand>
        <name>isopentenyl diphosphate</name>
        <dbReference type="ChEBI" id="CHEBI:128769"/>
    </ligand>
</feature>
<feature type="binding site" evidence="1">
    <location>
        <position position="170"/>
    </location>
    <ligand>
        <name>(2E)-4-hydroxy-3-methylbut-2-enyl diphosphate</name>
        <dbReference type="ChEBI" id="CHEBI:128753"/>
    </ligand>
</feature>
<feature type="binding site" evidence="1">
    <location>
        <position position="198"/>
    </location>
    <ligand>
        <name>[4Fe-4S] cluster</name>
        <dbReference type="ChEBI" id="CHEBI:49883"/>
    </ligand>
</feature>
<feature type="binding site" evidence="1">
    <location>
        <position position="226"/>
    </location>
    <ligand>
        <name>(2E)-4-hydroxy-3-methylbut-2-enyl diphosphate</name>
        <dbReference type="ChEBI" id="CHEBI:128753"/>
    </ligand>
</feature>
<feature type="binding site" evidence="1">
    <location>
        <position position="226"/>
    </location>
    <ligand>
        <name>dimethylallyl diphosphate</name>
        <dbReference type="ChEBI" id="CHEBI:57623"/>
    </ligand>
</feature>
<feature type="binding site" evidence="1">
    <location>
        <position position="226"/>
    </location>
    <ligand>
        <name>isopentenyl diphosphate</name>
        <dbReference type="ChEBI" id="CHEBI:128769"/>
    </ligand>
</feature>
<feature type="binding site" evidence="1">
    <location>
        <position position="228"/>
    </location>
    <ligand>
        <name>(2E)-4-hydroxy-3-methylbut-2-enyl diphosphate</name>
        <dbReference type="ChEBI" id="CHEBI:128753"/>
    </ligand>
</feature>
<feature type="binding site" evidence="1">
    <location>
        <position position="228"/>
    </location>
    <ligand>
        <name>dimethylallyl diphosphate</name>
        <dbReference type="ChEBI" id="CHEBI:57623"/>
    </ligand>
</feature>
<feature type="binding site" evidence="1">
    <location>
        <position position="228"/>
    </location>
    <ligand>
        <name>isopentenyl diphosphate</name>
        <dbReference type="ChEBI" id="CHEBI:128769"/>
    </ligand>
</feature>
<feature type="binding site" evidence="1">
    <location>
        <position position="271"/>
    </location>
    <ligand>
        <name>(2E)-4-hydroxy-3-methylbut-2-enyl diphosphate</name>
        <dbReference type="ChEBI" id="CHEBI:128753"/>
    </ligand>
</feature>
<feature type="binding site" evidence="1">
    <location>
        <position position="271"/>
    </location>
    <ligand>
        <name>dimethylallyl diphosphate</name>
        <dbReference type="ChEBI" id="CHEBI:57623"/>
    </ligand>
</feature>
<feature type="binding site" evidence="1">
    <location>
        <position position="271"/>
    </location>
    <ligand>
        <name>isopentenyl diphosphate</name>
        <dbReference type="ChEBI" id="CHEBI:128769"/>
    </ligand>
</feature>
<reference key="1">
    <citation type="journal article" date="2008" name="Chem. Biol. Interact.">
        <title>Extending the Bacillus cereus group genomics to putative food-borne pathogens of different toxicity.</title>
        <authorList>
            <person name="Lapidus A."/>
            <person name="Goltsman E."/>
            <person name="Auger S."/>
            <person name="Galleron N."/>
            <person name="Segurens B."/>
            <person name="Dossat C."/>
            <person name="Land M.L."/>
            <person name="Broussolle V."/>
            <person name="Brillard J."/>
            <person name="Guinebretiere M.-H."/>
            <person name="Sanchis V."/>
            <person name="Nguen-the C."/>
            <person name="Lereclus D."/>
            <person name="Richardson P."/>
            <person name="Wincker P."/>
            <person name="Weissenbach J."/>
            <person name="Ehrlich S.D."/>
            <person name="Sorokin A."/>
        </authorList>
    </citation>
    <scope>NUCLEOTIDE SEQUENCE [LARGE SCALE GENOMIC DNA]</scope>
    <source>
        <strain>KBAB4</strain>
    </source>
</reference>